<proteinExistence type="evidence at transcript level"/>
<name>VERP_CLORO</name>
<keyword id="KW-0436">Ligase</keyword>
<keyword id="KW-0596">Phosphopantetheine</keyword>
<keyword id="KW-0597">Phosphoprotein</keyword>
<keyword id="KW-0677">Repeat</keyword>
<protein>
    <recommendedName>
        <fullName evidence="1">Nonribosomal peptide synthetase verP</fullName>
        <shortName evidence="1">NRPS verP</shortName>
        <ecNumber evidence="1">6.3.2.-</ecNumber>
    </recommendedName>
    <alternativeName>
        <fullName evidence="6">Verticillin biosynthesis cluster protein P</fullName>
    </alternativeName>
</protein>
<sequence>MTLPTSLCDLFAQAASRCPDNLAVDHTEGSLTYRQLDDVSNSLANMLMGLGVNQLSPVILLTSHGTFNIIATLAILKVGSCCVPIDRATWPQERINYVCQTVANSVILNTTSEPFMPSEGAGDVLNYTSMQSGPSFRPNPVFQAHKVAADDTAYIIFTSGSTGKPKGVLISHKSLCLYSTTSPINLDIGPGDRLLHILSVAFDACACMLFSALGNCGTIVPAQAEDVLLQAPSCTVLAATPAMLKNLPSPTTENSIFSNLSRVILGGETASPDLLGLWIDAGVQVLIAYGVTETTSMGSIYRVERDPRTDAINPYIIGGVLEQSPIWIVDSELRIIKNENSEGEIIVGGDGVAQGYYNDEQKTRSNFIHWNGSRIYRTGDFGCWVLDANGRRVIEFRGRKDRTVKNQGYLVNLDRDVEAALYRVGESFGLTSVRAVATGNGIVAVVTPSNVNTSALIEKAKDIMCSYCIPYRIGAVDDLPLSPNGKVQHNELAELIKIIDEGQHNQENKADSQLSEKIERGKFGDDRHLDTLLTVARDVLSLPGQSFRILQPHDSFFAVGGSSLLAFKLVSVLGQHGLNIPARELFKNQPFSDVAPLITSRAHSSTWRLTEHDDKTQQTLAELQNQACQMLGLVQNSFEIGPLTSLQLDLALPTLGDESRNINQVKIAYNAPHSGIMRRAWQGLWQSEPVFRTEVSLAVGCGALIVHNKPFRKYRVVSHSCRDKYEEAVKGINMGVGLGCTLDVLTYHKTSDGLPYLPVSSNHNSSSSETDELTVVLTIHHSLMDGESLKLLLDKVDRIALGFSQPLSGSSINANLALIKTQNSRDSEVRSFFSDYLRHLSPENIAPGQVSATENLEGSSSRETAFFETSVSSVEVSDFAKLNCSSAACIYYIAWAMAVAAFDNSPDVLIGAVVSNRPALQHHEHAIGAYMSTLPLVFNFRDDEETVVDRIQKTMEDLATVGEYAWARSDQCGIGRRMRTLLSMQFPLPNESSKPPALWTESAENSDFPLCLLVESSGDFRMLYDATQFNWEAAQRLGQHFKHALYSLHHETRVTDCMTVNRLQENLAKQSEIFRLKPSERIVKQVLEQVMGQFPSLIAVEDCLGGKLTYSELDKLTNVIAHHINSTVPNAEVIALYSDGTIQWILGLLGTVKAGCTYVNLDPRSSVSRRETICKQCGAEALLLPNASQASEAPLMDNLKVLAVDEMLSGNSKKHNGKQPDRASLDSSLVIVFTSGTTGNPKGILISNRSFLSMETSYGTTMFAAPGRRIAQFMSPVFDVCNMEIFSALLHGATLVLRDPSDPYANLHRVNTAAVTPSAMAVIDLDDFPNLQLIYACGEPVTKSLVKRYTKRALLYNAYGPAECSILTSIERLIPGDQVTVGRPLSTVRVYILDEDQHPMAPGDRGEVCVAGVQVLRDYINAPEQAARNILTDPWYPGERMYRSGDSGSIGRDGRLSLHGRIDRLVKLRGFRVELAGVEHAVVSGPTEEGVSQCAAIAVNGLLIVYVSFERSQQHDSLSNKERIAQLLSRLREQLLPSSVPQEIVHIDNFPRTINGKIDTRALETQYSSYKNTSIEKAVGDCPITRPKIEDKLAHEWRQVLQLIPETQLQESDDFFKLGGHSVSIMLLATRLTAAFGKKITVRELLPSPTFKDQINMVRALLEIETFHKEEPQMLPPLLTEELTSIEKQVWFQHQVATTVTAFNIIRVIQIEGAVEIDKLCQSLNNILSIDPIFRSNIVEGPKGPARILRNSAPTVQEVDEFDIERALHHRFNLAHDYLIQVYLARHGCKGDNNDHATLVILTSHVIADLGTLQNFLQLTSTAYSGSTLVPLDRPKHLDSKSWTRIPTFSERKFWSEYLKGLIRRLGLTHHQLALAVGALFLQWFSAEDDLVLGAPNSGRPTSQEQESLGQFLDRLPIRITPNDLGNDDTMTKLTEILNRVRHSSLKALSNAISFSNIIQDLGYPSGGLEHPLFECDCFYTVS</sequence>
<evidence type="ECO:0000250" key="1">
    <source>
        <dbReference type="UniProtKB" id="Q4WMJ7"/>
    </source>
</evidence>
<evidence type="ECO:0000255" key="2"/>
<evidence type="ECO:0000255" key="3">
    <source>
        <dbReference type="PROSITE-ProRule" id="PRU00258"/>
    </source>
</evidence>
<evidence type="ECO:0000269" key="4">
    <source>
    </source>
</evidence>
<evidence type="ECO:0000269" key="5">
    <source>
    </source>
</evidence>
<evidence type="ECO:0000303" key="6">
    <source>
    </source>
</evidence>
<evidence type="ECO:0000305" key="7"/>
<evidence type="ECO:0000305" key="8">
    <source>
    </source>
</evidence>
<dbReference type="EC" id="6.3.2.-" evidence="1"/>
<dbReference type="EMBL" id="KY359203">
    <property type="protein sequence ID" value="AQZ42163.1"/>
    <property type="molecule type" value="Genomic_DNA"/>
</dbReference>
<dbReference type="SMR" id="A0A1U9YHZ2"/>
<dbReference type="GO" id="GO:0005737">
    <property type="term" value="C:cytoplasm"/>
    <property type="evidence" value="ECO:0007669"/>
    <property type="project" value="TreeGrafter"/>
</dbReference>
<dbReference type="GO" id="GO:0016874">
    <property type="term" value="F:ligase activity"/>
    <property type="evidence" value="ECO:0007669"/>
    <property type="project" value="UniProtKB-KW"/>
</dbReference>
<dbReference type="GO" id="GO:0031177">
    <property type="term" value="F:phosphopantetheine binding"/>
    <property type="evidence" value="ECO:0007669"/>
    <property type="project" value="TreeGrafter"/>
</dbReference>
<dbReference type="GO" id="GO:0043041">
    <property type="term" value="P:amino acid activation for nonribosomal peptide biosynthetic process"/>
    <property type="evidence" value="ECO:0007669"/>
    <property type="project" value="TreeGrafter"/>
</dbReference>
<dbReference type="GO" id="GO:0044550">
    <property type="term" value="P:secondary metabolite biosynthetic process"/>
    <property type="evidence" value="ECO:0007669"/>
    <property type="project" value="TreeGrafter"/>
</dbReference>
<dbReference type="Gene3D" id="3.30.300.30">
    <property type="match status" value="2"/>
</dbReference>
<dbReference type="Gene3D" id="1.10.1200.10">
    <property type="entry name" value="ACP-like"/>
    <property type="match status" value="2"/>
</dbReference>
<dbReference type="Gene3D" id="3.30.559.10">
    <property type="entry name" value="Chloramphenicol acetyltransferase-like domain"/>
    <property type="match status" value="1"/>
</dbReference>
<dbReference type="Gene3D" id="3.40.50.12780">
    <property type="entry name" value="N-terminal domain of ligase-like"/>
    <property type="match status" value="2"/>
</dbReference>
<dbReference type="Gene3D" id="3.30.559.30">
    <property type="entry name" value="Nonribosomal peptide synthetase, condensation domain"/>
    <property type="match status" value="2"/>
</dbReference>
<dbReference type="InterPro" id="IPR036736">
    <property type="entry name" value="ACP-like_sf"/>
</dbReference>
<dbReference type="InterPro" id="IPR045851">
    <property type="entry name" value="AMP-bd_C_sf"/>
</dbReference>
<dbReference type="InterPro" id="IPR020845">
    <property type="entry name" value="AMP-binding_CS"/>
</dbReference>
<dbReference type="InterPro" id="IPR000873">
    <property type="entry name" value="AMP-dep_synth/lig_dom"/>
</dbReference>
<dbReference type="InterPro" id="IPR042099">
    <property type="entry name" value="ANL_N_sf"/>
</dbReference>
<dbReference type="InterPro" id="IPR023213">
    <property type="entry name" value="CAT-like_dom_sf"/>
</dbReference>
<dbReference type="InterPro" id="IPR001242">
    <property type="entry name" value="Condensatn"/>
</dbReference>
<dbReference type="InterPro" id="IPR009081">
    <property type="entry name" value="PP-bd_ACP"/>
</dbReference>
<dbReference type="InterPro" id="IPR006162">
    <property type="entry name" value="Ppantetheine_attach_site"/>
</dbReference>
<dbReference type="PANTHER" id="PTHR45527">
    <property type="entry name" value="NONRIBOSOMAL PEPTIDE SYNTHETASE"/>
    <property type="match status" value="1"/>
</dbReference>
<dbReference type="PANTHER" id="PTHR45527:SF11">
    <property type="entry name" value="NONRIBOSOMAL PEPTIDE SYNTHETASE 5"/>
    <property type="match status" value="1"/>
</dbReference>
<dbReference type="Pfam" id="PF00501">
    <property type="entry name" value="AMP-binding"/>
    <property type="match status" value="2"/>
</dbReference>
<dbReference type="Pfam" id="PF00668">
    <property type="entry name" value="Condensation"/>
    <property type="match status" value="2"/>
</dbReference>
<dbReference type="Pfam" id="PF00550">
    <property type="entry name" value="PP-binding"/>
    <property type="match status" value="2"/>
</dbReference>
<dbReference type="SUPFAM" id="SSF56801">
    <property type="entry name" value="Acetyl-CoA synthetase-like"/>
    <property type="match status" value="2"/>
</dbReference>
<dbReference type="SUPFAM" id="SSF47336">
    <property type="entry name" value="ACP-like"/>
    <property type="match status" value="2"/>
</dbReference>
<dbReference type="SUPFAM" id="SSF52777">
    <property type="entry name" value="CoA-dependent acyltransferases"/>
    <property type="match status" value="3"/>
</dbReference>
<dbReference type="PROSITE" id="PS00455">
    <property type="entry name" value="AMP_BINDING"/>
    <property type="match status" value="2"/>
</dbReference>
<dbReference type="PROSITE" id="PS50075">
    <property type="entry name" value="CARRIER"/>
    <property type="match status" value="2"/>
</dbReference>
<dbReference type="PROSITE" id="PS00012">
    <property type="entry name" value="PHOSPHOPANTETHEINE"/>
    <property type="match status" value="1"/>
</dbReference>
<gene>
    <name evidence="6" type="primary">verP</name>
</gene>
<comment type="function">
    <text evidence="4 8">Nonribosomal peptide synthetase; part of the gene cluster that mediates the biosynthesis of 11'-deoxyverticillin A, one of the dimeric epipolythiodioxopiperazines (ETPs) from the verticillin family that act as mycotoxins (PubMed:28376389). 11'-deoxyverticillin A is required for normal conidiation (PubMed:28376389). The nonribosomal peptide synthetase verP is speculated to be responsible for condensation of amino acids to form the carbon skeleton of verticillin, whereas the cluster-specific tailoring enzymes are involved in further modifications leading to the production of 11'-deoxyverticillin A (Probable).</text>
</comment>
<comment type="pathway">
    <text evidence="4">Mycotoxin biosynthesis.</text>
</comment>
<comment type="induction">
    <text evidence="5">Expression is regulated by the cluster-specific regulator verZ.</text>
</comment>
<comment type="domain">
    <text evidence="1">NRP synthetases are composed of discrete domains (adenylation (A), thiolation (T) or peptidyl carrier protein (PCP) and condensation (C) domains) which when grouped together are referred to as a single module. Each module is responsible for the recognition (via the A domain) and incorporation of a single amino acid into the growing peptide product. Thus, an NRP synthetase is generally composed of one or more modules and can terminate in a thioesterase domain (TE) that releases the newly synthesized peptide from the enzyme. Occasionally, epimerase (E) domains (responsible for L- to D-amino acid conversion) are present within the NRP synthetase. VerP has the following architecture: A-T-C-A-T-C.</text>
</comment>
<comment type="disruption phenotype">
    <text evidence="4">Completely abolishes the 11'-deoxyverticillin A production and conidiation.</text>
</comment>
<comment type="similarity">
    <text evidence="7">Belongs to the NRP synthetase family.</text>
</comment>
<reference key="1">
    <citation type="journal article" date="2017" name="Fungal Genet. Biol.">
        <title>Identification and characterization of the verticillin biosynthetic gene cluster in Clonostachys rogersoniana.</title>
        <authorList>
            <person name="Wang Y."/>
            <person name="Hu P."/>
            <person name="Pan Y."/>
            <person name="Zhu Y."/>
            <person name="Liu X."/>
            <person name="Che Y."/>
            <person name="Liu G."/>
        </authorList>
    </citation>
    <scope>NUCLEOTIDE SEQUENCE [GENOMIC DNA]</scope>
    <scope>FUNCTION</scope>
    <scope>DISRUPTION PHENOTYPE</scope>
    <scope>PATHWAY</scope>
    <source>
        <strain>XZC04-CC-302</strain>
    </source>
</reference>
<reference key="2">
    <citation type="journal article" date="2017" name="Microbiology">
        <title>VerZ, a Zn(II)2Cys6 DNA-binding protein, regulates the biosynthesis of verticillin in Clonostachys rogersoniana.</title>
        <authorList>
            <person name="Guo Z."/>
            <person name="Hao T."/>
            <person name="Wang Y."/>
            <person name="Pan Y."/>
            <person name="Ren F."/>
            <person name="Liu X."/>
            <person name="Che Y."/>
            <person name="Liu G."/>
        </authorList>
    </citation>
    <scope>INDUCTION</scope>
</reference>
<organism>
    <name type="scientific">Clonostachys rogersoniana</name>
    <dbReference type="NCBI Taxonomy" id="122658"/>
    <lineage>
        <taxon>Eukaryota</taxon>
        <taxon>Fungi</taxon>
        <taxon>Dikarya</taxon>
        <taxon>Ascomycota</taxon>
        <taxon>Pezizomycotina</taxon>
        <taxon>Sordariomycetes</taxon>
        <taxon>Hypocreomycetidae</taxon>
        <taxon>Hypocreales</taxon>
        <taxon>Bionectriaceae</taxon>
        <taxon>Clonostachys</taxon>
    </lineage>
</organism>
<accession>A0A1U9YHZ2</accession>
<feature type="chain" id="PRO_0000450169" description="Nonribosomal peptide synthetase verP">
    <location>
        <begin position="1"/>
        <end position="1983"/>
    </location>
</feature>
<feature type="domain" description="Carrier 1" evidence="3">
    <location>
        <begin position="526"/>
        <end position="602"/>
    </location>
</feature>
<feature type="domain" description="Carrier 2" evidence="3">
    <location>
        <begin position="1584"/>
        <end position="1662"/>
    </location>
</feature>
<feature type="region of interest" description="Adenylation 1" evidence="2">
    <location>
        <begin position="11"/>
        <end position="405"/>
    </location>
</feature>
<feature type="region of interest" description="Condensation 1" evidence="2">
    <location>
        <begin position="769"/>
        <end position="1047"/>
    </location>
</feature>
<feature type="region of interest" description="Adenylation 2" evidence="2">
    <location>
        <begin position="1089"/>
        <end position="1469"/>
    </location>
</feature>
<feature type="region of interest" description="Condensation 2" evidence="2">
    <location>
        <begin position="1652"/>
        <end position="1976"/>
    </location>
</feature>
<feature type="modified residue" description="O-(pantetheine 4'-phosphoryl)serine" evidence="3">
    <location>
        <position position="563"/>
    </location>
</feature>
<feature type="modified residue" description="O-(pantetheine 4'-phosphoryl)serine" evidence="3">
    <location>
        <position position="1622"/>
    </location>
</feature>